<proteinExistence type="evidence at transcript level"/>
<comment type="function">
    <text evidence="2">The steroid hormones and their receptors are involved in the regulation of eukaryotic gene expression and affect cellular proliferation and differentiation in target tissues. Depending on the isoform, progesterone receptor functions as a transcriptional activator or repressor (By similarity).</text>
</comment>
<comment type="function">
    <molecule>Isoform A</molecule>
    <text evidence="2">Ligand-dependent transdominant repressor of steroid hormone receptor transcriptional activity including repression of its isoform B, MR and ER. Transrepressional activity may involve recruitment of corepressor NCOR2.</text>
</comment>
<comment type="function">
    <molecule>Isoform B</molecule>
    <text evidence="2">Transcriptional activator of several progesteron-dependent promoters in a variety of cell types. Involved in activation of SRC-dependent MAPK signaling on hormone stimulation.</text>
</comment>
<comment type="subunit">
    <text evidence="2 3">Interacts with SMARD1 and UNC45A. Interacts with CUEDC2; the interaction promotes ubiquitination, decreases sumoylation, and represses transcriptional activity. Interacts with PIAS3; the interaction promotes sumoylation of PR in a hormone-dependent manner, inhibits DNA-binding, and alters nuclear export. Interacts with SP1; the interaction requires ligand-induced phosphorylation on Ser-349 by ERK1/2-MAPK. Interacts with PRMT2. Isoform A interacts with NCOR2. Isoform B (but not isoform A) interacts with NCOA2 and NCOA1. Isoform B (but not isoform A) interacts with KLF9. Interacts with GTF2B (By similarity).</text>
</comment>
<comment type="subcellular location">
    <subcellularLocation>
        <location evidence="5 8">Nucleus</location>
    </subcellularLocation>
    <subcellularLocation>
        <location evidence="8">Cytoplasm</location>
    </subcellularLocation>
    <text evidence="1">Nucleoplasmic shuttling is both hormone- and cell cycle-dependent. On hormone stimulation, retained in the cytoplasm in the G(1) and G(2)/M phases (By similarity).</text>
</comment>
<comment type="alternative products">
    <event type="alternative splicing"/>
    <isoform>
        <id>Q9GLW0-1</id>
        <name evidence="8">B</name>
        <sequence type="displayed"/>
    </isoform>
    <isoform>
        <id>Q9GLW0-2</id>
        <name evidence="8">A</name>
        <sequence type="described" ref="VSP_050763"/>
    </isoform>
</comment>
<comment type="tissue specificity">
    <text evidence="8">Expressed in mammary gland and uterus.</text>
</comment>
<comment type="domain">
    <text>Composed of three domains: a modulating N-terminal domain, a DNA-binding domain and a C-terminal ligand-binding domain.</text>
</comment>
<comment type="PTM">
    <text evidence="1">Phosphorylated on multiple serine sites. Several of these sites are hormone-dependent. Phosphorylation on Ser-303 occurs preferentially on isoform B, is highly hormone-dependent and modulates ubiquitination and sumoylation on Lys-392. Phosphorylation on Ser-303 and Ser-349 also requires induction by hormone. Basal phosphorylation on Ser-200 and Ser-404 is increased in response to progesterone and can be phosphorylated in vitro by the CDK2-A1 complex. Increased levels of phosphorylation on Ser-404 also in the presence of EGF, heregulin, IGF, PMA and FBS. Phosphorylation at this site by CDK2 is ligand-independent, and increases nuclear translocation and transcriptional activity. Phosphorylation at Ser-303, but not at Ser-200, is impaired during the G(2)/M phase of the cell cycle. Phosphorylation on Ser-349 by ERK1/2 MAPK is required for interaction with SP1 (By similarity).</text>
</comment>
<comment type="PTM">
    <text evidence="1">Sumoylation is hormone-dependent and represses transcriptional activity. Sumoylation on all three sites is enhanced by PIAS3. Desumoylated by SENP1. Sumoylation on Lys-392, the main site of sumoylation, is repressed by ubiquitination on the same site, and modulated by phosphorylation at Ser-303 (By similarity).</text>
</comment>
<comment type="PTM">
    <text evidence="1">Ubiquitination is hormone-dependent and represses sumoylation on the same site. Promoted by MAPK-mediated phosphorylation on Ser-303 (By similarity).</text>
</comment>
<comment type="PTM">
    <text evidence="1">Palmitoylated by ZDHHC7 and ZDHHC21. Palmitoylation is required for plasma membrane targeting and for rapid intracellular signaling via ERK and AKT kinases and cAMP generation (By similarity).</text>
</comment>
<comment type="similarity">
    <text evidence="10">Belongs to the nuclear hormone receptor family. NR3 subfamily.</text>
</comment>
<protein>
    <recommendedName>
        <fullName>Progesterone receptor</fullName>
        <shortName>PR</shortName>
    </recommendedName>
    <alternativeName>
        <fullName>Nuclear receptor subfamily 3 group C member 3</fullName>
    </alternativeName>
</protein>
<gene>
    <name type="primary">PGR</name>
    <name type="synonym">NR3C3</name>
</gene>
<accession>Q9GLW0</accession>
<keyword id="KW-0025">Alternative splicing</keyword>
<keyword id="KW-0963">Cytoplasm</keyword>
<keyword id="KW-0238">DNA-binding</keyword>
<keyword id="KW-1017">Isopeptide bond</keyword>
<keyword id="KW-0446">Lipid-binding</keyword>
<keyword id="KW-0449">Lipoprotein</keyword>
<keyword id="KW-0479">Metal-binding</keyword>
<keyword id="KW-0539">Nucleus</keyword>
<keyword id="KW-0564">Palmitate</keyword>
<keyword id="KW-0597">Phosphoprotein</keyword>
<keyword id="KW-0675">Receptor</keyword>
<keyword id="KW-1185">Reference proteome</keyword>
<keyword id="KW-0754">Steroid-binding</keyword>
<keyword id="KW-0804">Transcription</keyword>
<keyword id="KW-0805">Transcription regulation</keyword>
<keyword id="KW-0832">Ubl conjugation</keyword>
<keyword id="KW-0862">Zinc</keyword>
<keyword id="KW-0863">Zinc-finger</keyword>
<sequence length="939" mass="98418">MTERTGKDARAPHVAGGAPSPAPAAEPESRRRDGGRLRASQTSDAPRVAAAAAAAAAAASAAPSAPSDRLLFSRRGQGADPGGKAQDAQPRPDVARADPRLEAASGAGADSPGPPRQDRGPLHGAPSTALRPAGPGQGRSSPAWEPRSPRCPSGPEPPEDPRGARSSQGAACPLMSRPEGKAGDGCGTAGAHKGPPRGLSPSRQPLPLCPGAHAWPGAAGKAATQPAALGVEDEGGFAAEGSPGPLLKGKPRPPAGPAAAAGAAPAAPGTAPGGTAPVPKEDSRLPAPKGSLAEQDAPAPGCSPLATTMMDFIHVPILPLGSAFLAARTRQLLEAETYDAGAFAPPRGSPSAPCAPLAAGDFPDCAYPSDAEPKDDAFPLYGDFQPPALKIKEEEEGAEAAARSPRPYLAAGPHSCVFADAPPALPALPPLPPRAPSSRPGEGAPAAAAAAGCSASSASSPGPALECVLYKAEGAPPPQGPFAAAPCRVPGAGACLLPRDGAAAAASAGAAGASPALYQPLGLGALPQLGYQAAVLKEGLPQVYQPYLNYLRPDSDASQSPQYSFESLPQKICLICGDEASGCHYGVLTCGSCKVFFKRAMEGQHNYLCAGRNDCIVDKIRRKNCPACRLRKCCQAGMVLGGRKFKKFNKVRVMRTLDAVALPQPVGIPNESQALSQRISFSPSQDIQLIPPLINLLMSIEPDVIYAGHDNTKPDTSSSLLTSLNQLGERQLLSVVKWSKSLPGFRNLHIDDQITLIQYSWMSLMVFGLGWRSYKHVSGQMLYFAPDLILNEQRMKESSFYSLCLTMWQIPQEFVKLQVSQEEFLCMKVLLLLNTIPLEGLRSQNQFEEMRSSYIRELIKAIGLRQKGVVSSSQRFYQLTKLLDNLHDLVKQLHLYCLNTFIQSRALSVEFPEMMSEVIAAQLPKILAGMVKPLLFHKK</sequence>
<organism evidence="11">
    <name type="scientific">Canis lupus familiaris</name>
    <name type="common">Dog</name>
    <name type="synonym">Canis familiaris</name>
    <dbReference type="NCBI Taxonomy" id="9615"/>
    <lineage>
        <taxon>Eukaryota</taxon>
        <taxon>Metazoa</taxon>
        <taxon>Chordata</taxon>
        <taxon>Craniata</taxon>
        <taxon>Vertebrata</taxon>
        <taxon>Euteleostomi</taxon>
        <taxon>Mammalia</taxon>
        <taxon>Eutheria</taxon>
        <taxon>Laurasiatheria</taxon>
        <taxon>Carnivora</taxon>
        <taxon>Caniformia</taxon>
        <taxon>Canidae</taxon>
        <taxon>Canis</taxon>
    </lineage>
</organism>
<feature type="chain" id="PRO_0000053692" description="Progesterone receptor">
    <location>
        <begin position="1"/>
        <end position="939"/>
    </location>
</feature>
<feature type="domain" description="NR LBD" evidence="6">
    <location>
        <begin position="685"/>
        <end position="919"/>
    </location>
</feature>
<feature type="DNA-binding region" description="Nuclear receptor" evidence="5">
    <location>
        <begin position="573"/>
        <end position="645"/>
    </location>
</feature>
<feature type="zinc finger region" description="NR C4-type" evidence="5">
    <location>
        <begin position="573"/>
        <end position="593"/>
    </location>
</feature>
<feature type="zinc finger region" description="NR C4-type" evidence="5">
    <location>
        <begin position="609"/>
        <end position="633"/>
    </location>
</feature>
<feature type="region of interest" description="Modulating, Ala/Pro-rich">
    <location>
        <begin position="1"/>
        <end position="572"/>
    </location>
</feature>
<feature type="region of interest" description="Disordered" evidence="7">
    <location>
        <begin position="1"/>
        <end position="302"/>
    </location>
</feature>
<feature type="region of interest" description="AF3; mediates transcriptional activation (in isoform B)" evidence="2">
    <location>
        <begin position="1"/>
        <end position="174"/>
    </location>
</feature>
<feature type="region of interest" description="Mediates transcriptional transrepression (in isoform A)" evidence="2">
    <location>
        <begin position="175"/>
        <end position="314"/>
    </location>
</feature>
<feature type="region of interest" description="AF1; mediates transcriptional activation" evidence="2">
    <location>
        <begin position="463"/>
        <end position="552"/>
    </location>
</feature>
<feature type="region of interest" description="AF2; mediates transcriptional activation" evidence="2">
    <location>
        <begin position="693"/>
        <end position="939"/>
    </location>
</feature>
<feature type="short sequence motif" description="Nuclear localization signal" evidence="4">
    <location>
        <begin position="193"/>
        <end position="197"/>
    </location>
</feature>
<feature type="compositionally biased region" description="Basic and acidic residues" evidence="7">
    <location>
        <begin position="1"/>
        <end position="11"/>
    </location>
</feature>
<feature type="compositionally biased region" description="Low complexity" evidence="7">
    <location>
        <begin position="15"/>
        <end position="26"/>
    </location>
</feature>
<feature type="compositionally biased region" description="Basic and acidic residues" evidence="7">
    <location>
        <begin position="27"/>
        <end position="36"/>
    </location>
</feature>
<feature type="compositionally biased region" description="Low complexity" evidence="7">
    <location>
        <begin position="49"/>
        <end position="67"/>
    </location>
</feature>
<feature type="compositionally biased region" description="Low complexity" evidence="7">
    <location>
        <begin position="211"/>
        <end position="230"/>
    </location>
</feature>
<feature type="compositionally biased region" description="Low complexity" evidence="7">
    <location>
        <begin position="257"/>
        <end position="278"/>
    </location>
</feature>
<feature type="modified residue" description="Phosphoserine" evidence="2">
    <location>
        <position position="20"/>
    </location>
</feature>
<feature type="modified residue" description="Phosphoserine" evidence="2">
    <location>
        <position position="141"/>
    </location>
</feature>
<feature type="modified residue" description="Phosphoserine" evidence="2">
    <location>
        <position position="200"/>
    </location>
</feature>
<feature type="modified residue" description="Phosphoserine; by MAPK1" evidence="2">
    <location>
        <position position="303"/>
    </location>
</feature>
<feature type="modified residue" description="Phosphoserine; by MAPK" evidence="2">
    <location>
        <position position="349"/>
    </location>
</feature>
<feature type="modified residue" description="Phosphoserine; by CDK2" evidence="2">
    <location>
        <position position="404"/>
    </location>
</feature>
<feature type="modified residue" description="Phosphoserine" evidence="2">
    <location>
        <position position="682"/>
    </location>
</feature>
<feature type="cross-link" description="Glycyl lysine isopeptide (Lys-Gly) (interchain with G-Cter in SUMO)" evidence="1">
    <location>
        <position position="7"/>
    </location>
</feature>
<feature type="cross-link" description="Glycyl lysine isopeptide (Lys-Gly) (interchain with G-Cter in SUMO); alternate" evidence="1">
    <location>
        <position position="392"/>
    </location>
</feature>
<feature type="cross-link" description="Glycyl lysine isopeptide (Lys-Gly) (interchain with G-Cter in ubiquitin); alternate" evidence="2">
    <location>
        <position position="392"/>
    </location>
</feature>
<feature type="cross-link" description="Glycyl lysine isopeptide (Lys-Gly) (interchain with G-Cter in SUMO)" evidence="1">
    <location>
        <position position="537"/>
    </location>
</feature>
<feature type="splice variant" id="VSP_050763" description="In isoform A." evidence="9">
    <location>
        <begin position="1"/>
        <end position="174"/>
    </location>
</feature>
<evidence type="ECO:0000250" key="1"/>
<evidence type="ECO:0000250" key="2">
    <source>
        <dbReference type="UniProtKB" id="P06401"/>
    </source>
</evidence>
<evidence type="ECO:0000250" key="3">
    <source>
        <dbReference type="UniProtKB" id="Q00175"/>
    </source>
</evidence>
<evidence type="ECO:0000255" key="4"/>
<evidence type="ECO:0000255" key="5">
    <source>
        <dbReference type="PROSITE-ProRule" id="PRU00407"/>
    </source>
</evidence>
<evidence type="ECO:0000255" key="6">
    <source>
        <dbReference type="PROSITE-ProRule" id="PRU01189"/>
    </source>
</evidence>
<evidence type="ECO:0000256" key="7">
    <source>
        <dbReference type="SAM" id="MobiDB-lite"/>
    </source>
</evidence>
<evidence type="ECO:0000269" key="8">
    <source>
    </source>
</evidence>
<evidence type="ECO:0000303" key="9">
    <source>
    </source>
</evidence>
<evidence type="ECO:0000305" key="10"/>
<evidence type="ECO:0000312" key="11">
    <source>
        <dbReference type="EMBL" id="AAG09282.1"/>
    </source>
</evidence>
<reference evidence="10" key="1">
    <citation type="journal article" date="2000" name="J. Steroid Biochem. Mol. Biol.">
        <title>Cloning and cellular localization of the canine progesterone receptor: co-localization with growth hormone in the mammary gland.</title>
        <authorList>
            <person name="Lantinga-van Leeuwen I.S."/>
            <person name="van Garderen E."/>
            <person name="Rutteman G.R."/>
            <person name="Mol J.A."/>
        </authorList>
    </citation>
    <scope>NUCLEOTIDE SEQUENCE [MRNA] (ISOFORMS A AND B)</scope>
    <scope>SUBCELLULAR LOCATION</scope>
    <scope>TISSUE SPECIFICITY</scope>
    <source>
        <tissue evidence="8">Mammary gland</tissue>
        <tissue evidence="8">Uterus</tissue>
    </source>
</reference>
<name>PRGR_CANLF</name>
<dbReference type="EMBL" id="AF177470">
    <property type="protein sequence ID" value="AAG09282.1"/>
    <property type="molecule type" value="mRNA"/>
</dbReference>
<dbReference type="RefSeq" id="NP_001003074.1">
    <molecule id="Q9GLW0-1"/>
    <property type="nucleotide sequence ID" value="NM_001003074.1"/>
</dbReference>
<dbReference type="SMR" id="Q9GLW0"/>
<dbReference type="FunCoup" id="Q9GLW0">
    <property type="interactions" value="66"/>
</dbReference>
<dbReference type="STRING" id="9615.ENSCAFP00000005906"/>
<dbReference type="PaxDb" id="9612-ENSCAFP00000005906"/>
<dbReference type="Ensembl" id="ENSCAFT00000006379.5">
    <molecule id="Q9GLW0-1"/>
    <property type="protein sequence ID" value="ENSCAFP00000005906.5"/>
    <property type="gene ID" value="ENSCAFG00000003978.5"/>
</dbReference>
<dbReference type="GeneID" id="403621"/>
<dbReference type="KEGG" id="cfa:403621"/>
<dbReference type="CTD" id="5241"/>
<dbReference type="eggNOG" id="KOG3575">
    <property type="taxonomic scope" value="Eukaryota"/>
</dbReference>
<dbReference type="InParanoid" id="Q9GLW0"/>
<dbReference type="OrthoDB" id="8580220at2759"/>
<dbReference type="Reactome" id="R-CFA-3371497">
    <property type="pathway name" value="HSP90 chaperone cycle for steroid hormone receptors (SHR) in the presence of ligand"/>
</dbReference>
<dbReference type="Reactome" id="R-CFA-383280">
    <property type="pathway name" value="Nuclear Receptor transcription pathway"/>
</dbReference>
<dbReference type="Proteomes" id="UP000002254">
    <property type="component" value="Chromosome 21"/>
</dbReference>
<dbReference type="Proteomes" id="UP000694429">
    <property type="component" value="Unplaced"/>
</dbReference>
<dbReference type="Proteomes" id="UP000694542">
    <property type="component" value="Unplaced"/>
</dbReference>
<dbReference type="Proteomes" id="UP000805418">
    <property type="component" value="Unplaced"/>
</dbReference>
<dbReference type="GO" id="GO:0005737">
    <property type="term" value="C:cytoplasm"/>
    <property type="evidence" value="ECO:0007669"/>
    <property type="project" value="UniProtKB-SubCell"/>
</dbReference>
<dbReference type="GO" id="GO:0005634">
    <property type="term" value="C:nucleus"/>
    <property type="evidence" value="ECO:0000314"/>
    <property type="project" value="UniProtKB"/>
</dbReference>
<dbReference type="GO" id="GO:0003677">
    <property type="term" value="F:DNA binding"/>
    <property type="evidence" value="ECO:0000305"/>
    <property type="project" value="UniProtKB"/>
</dbReference>
<dbReference type="GO" id="GO:0003707">
    <property type="term" value="F:nuclear steroid receptor activity"/>
    <property type="evidence" value="ECO:0007669"/>
    <property type="project" value="InterPro"/>
</dbReference>
<dbReference type="GO" id="GO:0043565">
    <property type="term" value="F:sequence-specific DNA binding"/>
    <property type="evidence" value="ECO:0007669"/>
    <property type="project" value="InterPro"/>
</dbReference>
<dbReference type="GO" id="GO:0005496">
    <property type="term" value="F:steroid binding"/>
    <property type="evidence" value="ECO:0007669"/>
    <property type="project" value="UniProtKB-KW"/>
</dbReference>
<dbReference type="GO" id="GO:0008270">
    <property type="term" value="F:zinc ion binding"/>
    <property type="evidence" value="ECO:0007669"/>
    <property type="project" value="UniProtKB-KW"/>
</dbReference>
<dbReference type="CDD" id="cd07172">
    <property type="entry name" value="NR_DBD_GR_PR"/>
    <property type="match status" value="1"/>
</dbReference>
<dbReference type="CDD" id="cd07074">
    <property type="entry name" value="NR_LBD_PR"/>
    <property type="match status" value="1"/>
</dbReference>
<dbReference type="FunFam" id="1.10.565.10:FF:000004">
    <property type="entry name" value="Androgen receptor variant"/>
    <property type="match status" value="1"/>
</dbReference>
<dbReference type="FunFam" id="3.30.50.10:FF:000027">
    <property type="entry name" value="Progesterone receptor"/>
    <property type="match status" value="1"/>
</dbReference>
<dbReference type="Gene3D" id="3.30.50.10">
    <property type="entry name" value="Erythroid Transcription Factor GATA-1, subunit A"/>
    <property type="match status" value="1"/>
</dbReference>
<dbReference type="Gene3D" id="1.10.565.10">
    <property type="entry name" value="Retinoid X Receptor"/>
    <property type="match status" value="1"/>
</dbReference>
<dbReference type="InterPro" id="IPR035500">
    <property type="entry name" value="NHR-like_dom_sf"/>
</dbReference>
<dbReference type="InterPro" id="IPR000536">
    <property type="entry name" value="Nucl_hrmn_rcpt_lig-bd"/>
</dbReference>
<dbReference type="InterPro" id="IPR050200">
    <property type="entry name" value="Nuclear_hormone_rcpt_NR3"/>
</dbReference>
<dbReference type="InterPro" id="IPR001723">
    <property type="entry name" value="Nuclear_hrmn_rcpt"/>
</dbReference>
<dbReference type="InterPro" id="IPR000128">
    <property type="entry name" value="Progest_rcpt"/>
</dbReference>
<dbReference type="InterPro" id="IPR001628">
    <property type="entry name" value="Znf_hrmn_rcpt"/>
</dbReference>
<dbReference type="InterPro" id="IPR013088">
    <property type="entry name" value="Znf_NHR/GATA"/>
</dbReference>
<dbReference type="PANTHER" id="PTHR48092">
    <property type="entry name" value="KNIRPS-RELATED PROTEIN-RELATED"/>
    <property type="match status" value="1"/>
</dbReference>
<dbReference type="Pfam" id="PF00104">
    <property type="entry name" value="Hormone_recep"/>
    <property type="match status" value="1"/>
</dbReference>
<dbReference type="Pfam" id="PF02161">
    <property type="entry name" value="Prog_receptor"/>
    <property type="match status" value="1"/>
</dbReference>
<dbReference type="Pfam" id="PF00105">
    <property type="entry name" value="zf-C4"/>
    <property type="match status" value="1"/>
</dbReference>
<dbReference type="PRINTS" id="PR00544">
    <property type="entry name" value="PROGESTRONER"/>
</dbReference>
<dbReference type="PRINTS" id="PR00398">
    <property type="entry name" value="STRDHORMONER"/>
</dbReference>
<dbReference type="PRINTS" id="PR00047">
    <property type="entry name" value="STROIDFINGER"/>
</dbReference>
<dbReference type="SMART" id="SM00430">
    <property type="entry name" value="HOLI"/>
    <property type="match status" value="1"/>
</dbReference>
<dbReference type="SMART" id="SM00399">
    <property type="entry name" value="ZnF_C4"/>
    <property type="match status" value="1"/>
</dbReference>
<dbReference type="SUPFAM" id="SSF57716">
    <property type="entry name" value="Glucocorticoid receptor-like (DNA-binding domain)"/>
    <property type="match status" value="1"/>
</dbReference>
<dbReference type="SUPFAM" id="SSF48508">
    <property type="entry name" value="Nuclear receptor ligand-binding domain"/>
    <property type="match status" value="1"/>
</dbReference>
<dbReference type="PROSITE" id="PS51843">
    <property type="entry name" value="NR_LBD"/>
    <property type="match status" value="1"/>
</dbReference>
<dbReference type="PROSITE" id="PS00031">
    <property type="entry name" value="NUCLEAR_REC_DBD_1"/>
    <property type="match status" value="1"/>
</dbReference>
<dbReference type="PROSITE" id="PS51030">
    <property type="entry name" value="NUCLEAR_REC_DBD_2"/>
    <property type="match status" value="1"/>
</dbReference>